<comment type="function">
    <text evidence="1">Catalyzes the specific phosphorylation of 1,6-anhydro-N-acetylmuramic acid (anhMurNAc) with the simultaneous cleavage of the 1,6-anhydro ring, generating MurNAc-6-P. Is required for the utilization of anhMurNAc either imported from the medium or derived from its own cell wall murein, and thus plays a role in cell wall recycling.</text>
</comment>
<comment type="catalytic activity">
    <reaction evidence="1">
        <text>1,6-anhydro-N-acetyl-beta-muramate + ATP + H2O = N-acetyl-D-muramate 6-phosphate + ADP + H(+)</text>
        <dbReference type="Rhea" id="RHEA:24952"/>
        <dbReference type="ChEBI" id="CHEBI:15377"/>
        <dbReference type="ChEBI" id="CHEBI:15378"/>
        <dbReference type="ChEBI" id="CHEBI:30616"/>
        <dbReference type="ChEBI" id="CHEBI:58690"/>
        <dbReference type="ChEBI" id="CHEBI:58722"/>
        <dbReference type="ChEBI" id="CHEBI:456216"/>
        <dbReference type="EC" id="2.7.1.170"/>
    </reaction>
</comment>
<comment type="pathway">
    <text evidence="1">Amino-sugar metabolism; 1,6-anhydro-N-acetylmuramate degradation.</text>
</comment>
<comment type="pathway">
    <text evidence="1">Cell wall biogenesis; peptidoglycan recycling.</text>
</comment>
<comment type="similarity">
    <text evidence="1">Belongs to the anhydro-N-acetylmuramic acid kinase family.</text>
</comment>
<keyword id="KW-0067">ATP-binding</keyword>
<keyword id="KW-0119">Carbohydrate metabolism</keyword>
<keyword id="KW-0418">Kinase</keyword>
<keyword id="KW-0547">Nucleotide-binding</keyword>
<keyword id="KW-1185">Reference proteome</keyword>
<keyword id="KW-0808">Transferase</keyword>
<feature type="chain" id="PRO_1000085839" description="Anhydro-N-acetylmuramic acid kinase">
    <location>
        <begin position="1"/>
        <end position="369"/>
    </location>
</feature>
<feature type="binding site" evidence="1">
    <location>
        <begin position="12"/>
        <end position="19"/>
    </location>
    <ligand>
        <name>ATP</name>
        <dbReference type="ChEBI" id="CHEBI:30616"/>
    </ligand>
</feature>
<name>ANMK_SHEPA</name>
<gene>
    <name evidence="1" type="primary">anmK</name>
    <name type="ordered locus">Spea_0993</name>
</gene>
<proteinExistence type="inferred from homology"/>
<reference key="1">
    <citation type="submission" date="2007-10" db="EMBL/GenBank/DDBJ databases">
        <title>Complete sequence of Shewanella pealeana ATCC 700345.</title>
        <authorList>
            <consortium name="US DOE Joint Genome Institute"/>
            <person name="Copeland A."/>
            <person name="Lucas S."/>
            <person name="Lapidus A."/>
            <person name="Barry K."/>
            <person name="Glavina del Rio T."/>
            <person name="Dalin E."/>
            <person name="Tice H."/>
            <person name="Pitluck S."/>
            <person name="Chertkov O."/>
            <person name="Brettin T."/>
            <person name="Bruce D."/>
            <person name="Detter J.C."/>
            <person name="Han C."/>
            <person name="Schmutz J."/>
            <person name="Larimer F."/>
            <person name="Land M."/>
            <person name="Hauser L."/>
            <person name="Kyrpides N."/>
            <person name="Kim E."/>
            <person name="Zhao J.-S.Z."/>
            <person name="Manno D."/>
            <person name="Hawari J."/>
            <person name="Richardson P."/>
        </authorList>
    </citation>
    <scope>NUCLEOTIDE SEQUENCE [LARGE SCALE GENOMIC DNA]</scope>
    <source>
        <strain>ATCC 700345 / ANG-SQ1</strain>
    </source>
</reference>
<protein>
    <recommendedName>
        <fullName evidence="1">Anhydro-N-acetylmuramic acid kinase</fullName>
        <ecNumber evidence="1">2.7.1.170</ecNumber>
    </recommendedName>
    <alternativeName>
        <fullName evidence="1">AnhMurNAc kinase</fullName>
    </alternativeName>
</protein>
<organism>
    <name type="scientific">Shewanella pealeana (strain ATCC 700345 / ANG-SQ1)</name>
    <dbReference type="NCBI Taxonomy" id="398579"/>
    <lineage>
        <taxon>Bacteria</taxon>
        <taxon>Pseudomonadati</taxon>
        <taxon>Pseudomonadota</taxon>
        <taxon>Gammaproteobacteria</taxon>
        <taxon>Alteromonadales</taxon>
        <taxon>Shewanellaceae</taxon>
        <taxon>Shewanella</taxon>
    </lineage>
</organism>
<accession>A8H183</accession>
<dbReference type="EC" id="2.7.1.170" evidence="1"/>
<dbReference type="EMBL" id="CP000851">
    <property type="protein sequence ID" value="ABV86320.1"/>
    <property type="molecule type" value="Genomic_DNA"/>
</dbReference>
<dbReference type="RefSeq" id="WP_012154253.1">
    <property type="nucleotide sequence ID" value="NC_009901.1"/>
</dbReference>
<dbReference type="SMR" id="A8H183"/>
<dbReference type="STRING" id="398579.Spea_0993"/>
<dbReference type="KEGG" id="spl:Spea_0993"/>
<dbReference type="eggNOG" id="COG2377">
    <property type="taxonomic scope" value="Bacteria"/>
</dbReference>
<dbReference type="HOGENOM" id="CLU_038782_0_0_6"/>
<dbReference type="OrthoDB" id="9763949at2"/>
<dbReference type="UniPathway" id="UPA00343"/>
<dbReference type="UniPathway" id="UPA00544"/>
<dbReference type="Proteomes" id="UP000002608">
    <property type="component" value="Chromosome"/>
</dbReference>
<dbReference type="GO" id="GO:0005524">
    <property type="term" value="F:ATP binding"/>
    <property type="evidence" value="ECO:0007669"/>
    <property type="project" value="UniProtKB-UniRule"/>
</dbReference>
<dbReference type="GO" id="GO:0016301">
    <property type="term" value="F:kinase activity"/>
    <property type="evidence" value="ECO:0007669"/>
    <property type="project" value="UniProtKB-KW"/>
</dbReference>
<dbReference type="GO" id="GO:0016773">
    <property type="term" value="F:phosphotransferase activity, alcohol group as acceptor"/>
    <property type="evidence" value="ECO:0007669"/>
    <property type="project" value="UniProtKB-UniRule"/>
</dbReference>
<dbReference type="GO" id="GO:0097175">
    <property type="term" value="P:1,6-anhydro-N-acetyl-beta-muramic acid catabolic process"/>
    <property type="evidence" value="ECO:0007669"/>
    <property type="project" value="UniProtKB-UniRule"/>
</dbReference>
<dbReference type="GO" id="GO:0006040">
    <property type="term" value="P:amino sugar metabolic process"/>
    <property type="evidence" value="ECO:0007669"/>
    <property type="project" value="InterPro"/>
</dbReference>
<dbReference type="GO" id="GO:0009254">
    <property type="term" value="P:peptidoglycan turnover"/>
    <property type="evidence" value="ECO:0007669"/>
    <property type="project" value="UniProtKB-UniRule"/>
</dbReference>
<dbReference type="CDD" id="cd24050">
    <property type="entry name" value="ASKHA_NBD_ANMK"/>
    <property type="match status" value="1"/>
</dbReference>
<dbReference type="Gene3D" id="3.30.420.40">
    <property type="match status" value="2"/>
</dbReference>
<dbReference type="HAMAP" id="MF_01270">
    <property type="entry name" value="AnhMurNAc_kinase"/>
    <property type="match status" value="1"/>
</dbReference>
<dbReference type="InterPro" id="IPR005338">
    <property type="entry name" value="Anhydro_N_Ac-Mur_kinase"/>
</dbReference>
<dbReference type="InterPro" id="IPR043129">
    <property type="entry name" value="ATPase_NBD"/>
</dbReference>
<dbReference type="NCBIfam" id="NF007139">
    <property type="entry name" value="PRK09585.1-3"/>
    <property type="match status" value="1"/>
</dbReference>
<dbReference type="NCBIfam" id="NF007148">
    <property type="entry name" value="PRK09585.3-2"/>
    <property type="match status" value="1"/>
</dbReference>
<dbReference type="PANTHER" id="PTHR30605">
    <property type="entry name" value="ANHYDRO-N-ACETYLMURAMIC ACID KINASE"/>
    <property type="match status" value="1"/>
</dbReference>
<dbReference type="PANTHER" id="PTHR30605:SF0">
    <property type="entry name" value="ANHYDRO-N-ACETYLMURAMIC ACID KINASE"/>
    <property type="match status" value="1"/>
</dbReference>
<dbReference type="Pfam" id="PF03702">
    <property type="entry name" value="AnmK"/>
    <property type="match status" value="1"/>
</dbReference>
<dbReference type="SUPFAM" id="SSF53067">
    <property type="entry name" value="Actin-like ATPase domain"/>
    <property type="match status" value="1"/>
</dbReference>
<sequence>MNNNYYVGLMSGTSMDGVDAVLVSFDGDQPSLIASHTEELPKALLSSLQKLCLPGNDEINRLGHLDRSMGKLFAKAVNALLETANIDKSQVIAIGSHGQTVRHMPNLEMGFTLQIGDPNTIAVETGIDVIADFRRKDIALGGQGAPLVPAFHQHVFGSPNHKRIILNIGGIANVTYLPGNNEDVTGFDTGPGNGLSDAWIQHQLSQPYDKDGAWAKSGTTDQKMLQHLLSHPYFALAAPKSTGRELFNQAWAEQQLSEFGHLSEADIQSTLLDLTCYSIANDALKLSENGELYVCGGGAYNSELMHRLHKLLPNYKVVTTSELGMDPQWVEGIAFAWLAMRYHQGLPGNLPAVTGASREAILGSFYPAD</sequence>
<evidence type="ECO:0000255" key="1">
    <source>
        <dbReference type="HAMAP-Rule" id="MF_01270"/>
    </source>
</evidence>